<organism>
    <name type="scientific">Homo sapiens</name>
    <name type="common">Human</name>
    <dbReference type="NCBI Taxonomy" id="9606"/>
    <lineage>
        <taxon>Eukaryota</taxon>
        <taxon>Metazoa</taxon>
        <taxon>Chordata</taxon>
        <taxon>Craniata</taxon>
        <taxon>Vertebrata</taxon>
        <taxon>Euteleostomi</taxon>
        <taxon>Mammalia</taxon>
        <taxon>Eutheria</taxon>
        <taxon>Euarchontoglires</taxon>
        <taxon>Primates</taxon>
        <taxon>Haplorrhini</taxon>
        <taxon>Catarrhini</taxon>
        <taxon>Hominidae</taxon>
        <taxon>Homo</taxon>
    </lineage>
</organism>
<reference key="1">
    <citation type="journal article" date="2006" name="Nature">
        <title>DNA sequence and analysis of human chromosome 8.</title>
        <authorList>
            <person name="Nusbaum C."/>
            <person name="Mikkelsen T.S."/>
            <person name="Zody M.C."/>
            <person name="Asakawa S."/>
            <person name="Taudien S."/>
            <person name="Garber M."/>
            <person name="Kodira C.D."/>
            <person name="Schueler M.G."/>
            <person name="Shimizu A."/>
            <person name="Whittaker C.A."/>
            <person name="Chang J.L."/>
            <person name="Cuomo C.A."/>
            <person name="Dewar K."/>
            <person name="FitzGerald M.G."/>
            <person name="Yang X."/>
            <person name="Allen N.R."/>
            <person name="Anderson S."/>
            <person name="Asakawa T."/>
            <person name="Blechschmidt K."/>
            <person name="Bloom T."/>
            <person name="Borowsky M.L."/>
            <person name="Butler J."/>
            <person name="Cook A."/>
            <person name="Corum B."/>
            <person name="DeArellano K."/>
            <person name="DeCaprio D."/>
            <person name="Dooley K.T."/>
            <person name="Dorris L. III"/>
            <person name="Engels R."/>
            <person name="Gloeckner G."/>
            <person name="Hafez N."/>
            <person name="Hagopian D.S."/>
            <person name="Hall J.L."/>
            <person name="Ishikawa S.K."/>
            <person name="Jaffe D.B."/>
            <person name="Kamat A."/>
            <person name="Kudoh J."/>
            <person name="Lehmann R."/>
            <person name="Lokitsang T."/>
            <person name="Macdonald P."/>
            <person name="Major J.E."/>
            <person name="Matthews C.D."/>
            <person name="Mauceli E."/>
            <person name="Menzel U."/>
            <person name="Mihalev A.H."/>
            <person name="Minoshima S."/>
            <person name="Murayama Y."/>
            <person name="Naylor J.W."/>
            <person name="Nicol R."/>
            <person name="Nguyen C."/>
            <person name="O'Leary S.B."/>
            <person name="O'Neill K."/>
            <person name="Parker S.C.J."/>
            <person name="Polley A."/>
            <person name="Raymond C.K."/>
            <person name="Reichwald K."/>
            <person name="Rodriguez J."/>
            <person name="Sasaki T."/>
            <person name="Schilhabel M."/>
            <person name="Siddiqui R."/>
            <person name="Smith C.L."/>
            <person name="Sneddon T.P."/>
            <person name="Talamas J.A."/>
            <person name="Tenzin P."/>
            <person name="Topham K."/>
            <person name="Venkataraman V."/>
            <person name="Wen G."/>
            <person name="Yamazaki S."/>
            <person name="Young S.K."/>
            <person name="Zeng Q."/>
            <person name="Zimmer A.R."/>
            <person name="Rosenthal A."/>
            <person name="Birren B.W."/>
            <person name="Platzer M."/>
            <person name="Shimizu N."/>
            <person name="Lander E.S."/>
        </authorList>
    </citation>
    <scope>NUCLEOTIDE SEQUENCE [LARGE SCALE GENOMIC DNA]</scope>
</reference>
<reference key="2">
    <citation type="journal article" date="2004" name="Genome Res.">
        <title>The status, quality, and expansion of the NIH full-length cDNA project: the Mammalian Gene Collection (MGC).</title>
        <authorList>
            <consortium name="The MGC Project Team"/>
        </authorList>
    </citation>
    <scope>NUCLEOTIDE SEQUENCE [LARGE SCALE MRNA] (ISOFORMS 1 AND 2)</scope>
    <scope>VARIANTS MET-6; ARG-102; LYS-165; ALA-231; GLY-452; HIS-578; TRP-636 AND ARG-727</scope>
    <source>
        <tissue>Brain</tissue>
    </source>
</reference>
<reference key="3">
    <citation type="journal article" date="1995" name="DNA Res.">
        <title>Prediction of the coding sequences of unidentified human genes. IV. The coding sequences of 40 new genes (KIAA0121-KIAA0160) deduced by analysis of cDNA clones from human cell line KG-1.</title>
        <authorList>
            <person name="Nagase T."/>
            <person name="Seki N."/>
            <person name="Tanaka A."/>
            <person name="Ishikawa K."/>
            <person name="Nomura N."/>
        </authorList>
    </citation>
    <scope>NUCLEOTIDE SEQUENCE [LARGE SCALE MRNA] OF 5-948 (ISOFORM 1)</scope>
    <scope>VARIANTS ASP-151; GLY-399 AND GLY-452</scope>
    <source>
        <tissue>Bone marrow</tissue>
    </source>
</reference>
<reference key="4">
    <citation type="journal article" date="2006" name="Cell">
        <title>Global, in vivo, and site-specific phosphorylation dynamics in signaling networks.</title>
        <authorList>
            <person name="Olsen J.V."/>
            <person name="Blagoev B."/>
            <person name="Gnad F."/>
            <person name="Macek B."/>
            <person name="Kumar C."/>
            <person name="Mortensen P."/>
            <person name="Mann M."/>
        </authorList>
    </citation>
    <scope>IDENTIFICATION BY MASS SPECTROMETRY [LARGE SCALE ANALYSIS]</scope>
    <source>
        <tissue>Cervix carcinoma</tissue>
    </source>
</reference>
<reference key="5">
    <citation type="journal article" date="2008" name="Proc. Natl. Acad. Sci. U.S.A.">
        <title>A quantitative atlas of mitotic phosphorylation.</title>
        <authorList>
            <person name="Dephoure N."/>
            <person name="Zhou C."/>
            <person name="Villen J."/>
            <person name="Beausoleil S.A."/>
            <person name="Bakalarski C.E."/>
            <person name="Elledge S.J."/>
            <person name="Gygi S.P."/>
        </authorList>
    </citation>
    <scope>PHOSPHORYLATION [LARGE SCALE ANALYSIS] AT SER-918 AND SER-920</scope>
    <scope>IDENTIFICATION BY MASS SPECTROMETRY [LARGE SCALE ANALYSIS]</scope>
    <source>
        <tissue>Cervix carcinoma</tissue>
    </source>
</reference>
<reference key="6">
    <citation type="journal article" date="2009" name="J. Cell Biol.">
        <title>A conserved CCCH-type zinc finger protein regulates mRNA nuclear adenylation and export.</title>
        <authorList>
            <person name="Hurt J.A."/>
            <person name="Obar R.A."/>
            <person name="Zhai B."/>
            <person name="Farny N.G."/>
            <person name="Gygi S.P."/>
            <person name="Silver P.A."/>
        </authorList>
    </citation>
    <scope>FUNCTION</scope>
</reference>
<reference key="7">
    <citation type="journal article" date="2011" name="Sci. Signal.">
        <title>System-wide temporal characterization of the proteome and phosphoproteome of human embryonic stem cell differentiation.</title>
        <authorList>
            <person name="Rigbolt K.T."/>
            <person name="Prokhorova T.A."/>
            <person name="Akimov V."/>
            <person name="Henningsen J."/>
            <person name="Johansen P.T."/>
            <person name="Kratchmarova I."/>
            <person name="Kassem M."/>
            <person name="Mann M."/>
            <person name="Olsen J.V."/>
            <person name="Blagoev B."/>
        </authorList>
    </citation>
    <scope>PHOSPHORYLATION [LARGE SCALE ANALYSIS] AT SER-408</scope>
    <scope>IDENTIFICATION BY MASS SPECTROMETRY [LARGE SCALE ANALYSIS]</scope>
</reference>
<reference key="8">
    <citation type="journal article" date="2013" name="J. Proteome Res.">
        <title>Toward a comprehensive characterization of a human cancer cell phosphoproteome.</title>
        <authorList>
            <person name="Zhou H."/>
            <person name="Di Palma S."/>
            <person name="Preisinger C."/>
            <person name="Peng M."/>
            <person name="Polat A.N."/>
            <person name="Heck A.J."/>
            <person name="Mohammed S."/>
        </authorList>
    </citation>
    <scope>PHOSPHORYLATION [LARGE SCALE ANALYSIS] AT SER-408</scope>
    <scope>IDENTIFICATION BY MASS SPECTROMETRY [LARGE SCALE ANALYSIS]</scope>
    <source>
        <tissue>Erythroleukemia</tissue>
    </source>
</reference>
<keyword id="KW-0025">Alternative splicing</keyword>
<keyword id="KW-0238">DNA-binding</keyword>
<keyword id="KW-0479">Metal-binding</keyword>
<keyword id="KW-0509">mRNA transport</keyword>
<keyword id="KW-0539">Nucleus</keyword>
<keyword id="KW-0597">Phosphoprotein</keyword>
<keyword id="KW-1267">Proteomics identification</keyword>
<keyword id="KW-1185">Reference proteome</keyword>
<keyword id="KW-0677">Repeat</keyword>
<keyword id="KW-0813">Transport</keyword>
<keyword id="KW-0862">Zinc</keyword>
<keyword id="KW-0863">Zinc-finger</keyword>
<proteinExistence type="evidence at protein level"/>
<dbReference type="EMBL" id="AC067930">
    <property type="status" value="NOT_ANNOTATED_CDS"/>
    <property type="molecule type" value="Genomic_DNA"/>
</dbReference>
<dbReference type="EMBL" id="AC105118">
    <property type="status" value="NOT_ANNOTATED_CDS"/>
    <property type="molecule type" value="Genomic_DNA"/>
</dbReference>
<dbReference type="EMBL" id="BC034435">
    <property type="protein sequence ID" value="AAH34435.1"/>
    <property type="molecule type" value="mRNA"/>
</dbReference>
<dbReference type="EMBL" id="BC038670">
    <property type="protein sequence ID" value="AAH38670.1"/>
    <property type="molecule type" value="mRNA"/>
</dbReference>
<dbReference type="EMBL" id="D63484">
    <property type="protein sequence ID" value="BAA09771.1"/>
    <property type="molecule type" value="mRNA"/>
</dbReference>
<dbReference type="CCDS" id="CCDS6402.1">
    <molecule id="Q8IXZ2-1"/>
</dbReference>
<dbReference type="RefSeq" id="NP_055932.2">
    <molecule id="Q8IXZ2-1"/>
    <property type="nucleotide sequence ID" value="NM_015117.3"/>
</dbReference>
<dbReference type="SMR" id="Q8IXZ2"/>
<dbReference type="BioGRID" id="116761">
    <property type="interactions" value="241"/>
</dbReference>
<dbReference type="ComplexPortal" id="CPX-2750">
    <property type="entry name" value="Poly(A) tail exosome targeting complex, RBM26 variant"/>
</dbReference>
<dbReference type="ComplexPortal" id="CPX-2752">
    <property type="entry name" value="Poly(A) tail exosome targeting complex, RBM27 variant"/>
</dbReference>
<dbReference type="FunCoup" id="Q8IXZ2">
    <property type="interactions" value="2214"/>
</dbReference>
<dbReference type="IntAct" id="Q8IXZ2">
    <property type="interactions" value="205"/>
</dbReference>
<dbReference type="STRING" id="9606.ENSP00000262577"/>
<dbReference type="GlyGen" id="Q8IXZ2">
    <property type="glycosylation" value="4 sites, 1 O-linked glycan (3 sites)"/>
</dbReference>
<dbReference type="iPTMnet" id="Q8IXZ2"/>
<dbReference type="PhosphoSitePlus" id="Q8IXZ2"/>
<dbReference type="BioMuta" id="ZC3H3"/>
<dbReference type="DMDM" id="308153538"/>
<dbReference type="jPOST" id="Q8IXZ2"/>
<dbReference type="MassIVE" id="Q8IXZ2"/>
<dbReference type="PaxDb" id="9606-ENSP00000262577"/>
<dbReference type="PeptideAtlas" id="Q8IXZ2"/>
<dbReference type="ProteomicsDB" id="71078">
    <molecule id="Q8IXZ2-1"/>
</dbReference>
<dbReference type="ProteomicsDB" id="71079">
    <molecule id="Q8IXZ2-2"/>
</dbReference>
<dbReference type="Pumba" id="Q8IXZ2"/>
<dbReference type="Antibodypedia" id="14596">
    <property type="antibodies" value="97 antibodies from 20 providers"/>
</dbReference>
<dbReference type="DNASU" id="23144"/>
<dbReference type="Ensembl" id="ENST00000262577.6">
    <molecule id="Q8IXZ2-1"/>
    <property type="protein sequence ID" value="ENSP00000262577.5"/>
    <property type="gene ID" value="ENSG00000014164.7"/>
</dbReference>
<dbReference type="GeneID" id="23144"/>
<dbReference type="KEGG" id="hsa:23144"/>
<dbReference type="MANE-Select" id="ENST00000262577.6">
    <property type="protein sequence ID" value="ENSP00000262577.5"/>
    <property type="RefSeq nucleotide sequence ID" value="NM_015117.3"/>
    <property type="RefSeq protein sequence ID" value="NP_055932.2"/>
</dbReference>
<dbReference type="UCSC" id="uc003yyd.3">
    <molecule id="Q8IXZ2-1"/>
    <property type="organism name" value="human"/>
</dbReference>
<dbReference type="AGR" id="HGNC:28972"/>
<dbReference type="CTD" id="23144"/>
<dbReference type="DisGeNET" id="23144"/>
<dbReference type="GeneCards" id="ZC3H3"/>
<dbReference type="HGNC" id="HGNC:28972">
    <property type="gene designation" value="ZC3H3"/>
</dbReference>
<dbReference type="HPA" id="ENSG00000014164">
    <property type="expression patterns" value="Low tissue specificity"/>
</dbReference>
<dbReference type="MIM" id="618640">
    <property type="type" value="gene"/>
</dbReference>
<dbReference type="neXtProt" id="NX_Q8IXZ2"/>
<dbReference type="OpenTargets" id="ENSG00000014164"/>
<dbReference type="PharmGKB" id="PA134933089"/>
<dbReference type="VEuPathDB" id="HostDB:ENSG00000014164"/>
<dbReference type="eggNOG" id="KOG1492">
    <property type="taxonomic scope" value="Eukaryota"/>
</dbReference>
<dbReference type="GeneTree" id="ENSGT00940000161068"/>
<dbReference type="HOGENOM" id="CLU_014207_0_0_1"/>
<dbReference type="InParanoid" id="Q8IXZ2"/>
<dbReference type="OMA" id="VSCRTNK"/>
<dbReference type="OrthoDB" id="3247158at2759"/>
<dbReference type="PAN-GO" id="Q8IXZ2">
    <property type="GO annotations" value="1 GO annotation based on evolutionary models"/>
</dbReference>
<dbReference type="PhylomeDB" id="Q8IXZ2"/>
<dbReference type="TreeFam" id="TF324375"/>
<dbReference type="PathwayCommons" id="Q8IXZ2"/>
<dbReference type="SignaLink" id="Q8IXZ2"/>
<dbReference type="BioGRID-ORCS" id="23144">
    <property type="hits" value="108 hits in 1151 CRISPR screens"/>
</dbReference>
<dbReference type="ChiTaRS" id="ZC3H3">
    <property type="organism name" value="human"/>
</dbReference>
<dbReference type="GenomeRNAi" id="23144"/>
<dbReference type="Pharos" id="Q8IXZ2">
    <property type="development level" value="Tbio"/>
</dbReference>
<dbReference type="PRO" id="PR:Q8IXZ2"/>
<dbReference type="Proteomes" id="UP000005640">
    <property type="component" value="Chromosome 8"/>
</dbReference>
<dbReference type="RNAct" id="Q8IXZ2">
    <property type="molecule type" value="protein"/>
</dbReference>
<dbReference type="Bgee" id="ENSG00000014164">
    <property type="expression patterns" value="Expressed in right lobe of liver and 111 other cell types or tissues"/>
</dbReference>
<dbReference type="ExpressionAtlas" id="Q8IXZ2">
    <property type="expression patterns" value="baseline and differential"/>
</dbReference>
<dbReference type="GO" id="GO:0005847">
    <property type="term" value="C:mRNA cleavage and polyadenylation specificity factor complex"/>
    <property type="evidence" value="ECO:0007669"/>
    <property type="project" value="Ensembl"/>
</dbReference>
<dbReference type="GO" id="GO:0005634">
    <property type="term" value="C:nucleus"/>
    <property type="evidence" value="ECO:0000314"/>
    <property type="project" value="UniProtKB"/>
</dbReference>
<dbReference type="GO" id="GO:0003677">
    <property type="term" value="F:DNA binding"/>
    <property type="evidence" value="ECO:0007669"/>
    <property type="project" value="UniProtKB-KW"/>
</dbReference>
<dbReference type="GO" id="GO:0070412">
    <property type="term" value="F:R-SMAD binding"/>
    <property type="evidence" value="ECO:0007669"/>
    <property type="project" value="Ensembl"/>
</dbReference>
<dbReference type="GO" id="GO:0008270">
    <property type="term" value="F:zinc ion binding"/>
    <property type="evidence" value="ECO:0007669"/>
    <property type="project" value="UniProtKB-KW"/>
</dbReference>
<dbReference type="GO" id="GO:0031124">
    <property type="term" value="P:mRNA 3'-end processing"/>
    <property type="evidence" value="ECO:0007669"/>
    <property type="project" value="Ensembl"/>
</dbReference>
<dbReference type="GO" id="GO:0051028">
    <property type="term" value="P:mRNA transport"/>
    <property type="evidence" value="ECO:0007669"/>
    <property type="project" value="UniProtKB-KW"/>
</dbReference>
<dbReference type="GO" id="GO:0032927">
    <property type="term" value="P:positive regulation of activin receptor signaling pathway"/>
    <property type="evidence" value="ECO:0007669"/>
    <property type="project" value="Ensembl"/>
</dbReference>
<dbReference type="FunFam" id="4.10.1000.10:FF:000008">
    <property type="entry name" value="zinc finger CCCH domain-containing protein 3"/>
    <property type="match status" value="1"/>
</dbReference>
<dbReference type="FunFam" id="4.10.1000.10:FF:000022">
    <property type="entry name" value="Zinc finger CCCH domain-containing protein 7"/>
    <property type="match status" value="1"/>
</dbReference>
<dbReference type="Gene3D" id="3.30.1370.210">
    <property type="match status" value="1"/>
</dbReference>
<dbReference type="Gene3D" id="4.10.1000.10">
    <property type="entry name" value="Zinc finger, CCCH-type"/>
    <property type="match status" value="2"/>
</dbReference>
<dbReference type="InterPro" id="IPR000571">
    <property type="entry name" value="Znf_CCCH"/>
</dbReference>
<dbReference type="InterPro" id="IPR036855">
    <property type="entry name" value="Znf_CCCH_sf"/>
</dbReference>
<dbReference type="PANTHER" id="PTHR46156">
    <property type="entry name" value="CCCH ZINGC FINGER"/>
    <property type="match status" value="1"/>
</dbReference>
<dbReference type="PANTHER" id="PTHR46156:SF1">
    <property type="entry name" value="ZINC FINGER CCCH DOMAIN-CONTAINING PROTEIN 3"/>
    <property type="match status" value="1"/>
</dbReference>
<dbReference type="Pfam" id="PF00642">
    <property type="entry name" value="zf-CCCH"/>
    <property type="match status" value="2"/>
</dbReference>
<dbReference type="SMART" id="SM00356">
    <property type="entry name" value="ZnF_C3H1"/>
    <property type="match status" value="5"/>
</dbReference>
<dbReference type="SUPFAM" id="SSF90229">
    <property type="entry name" value="CCCH zinc finger"/>
    <property type="match status" value="2"/>
</dbReference>
<dbReference type="PROSITE" id="PS50103">
    <property type="entry name" value="ZF_C3H1"/>
    <property type="match status" value="5"/>
</dbReference>
<comment type="function">
    <text evidence="1 5">Required for the export of polyadenylated mRNAs from the nucleus (PubMed:19364924). Enhances ACVR1B-induced SMAD-dependent transcription. Binds to single-stranded DNA but not to double-stranded DNA in vitro. Involved in RNA cleavage (By similarity).</text>
</comment>
<comment type="subunit">
    <text evidence="1">Interacts with SMAD1, SMAD3, SMAD4, CPSF2 and CPSF3 (By similarity).</text>
</comment>
<comment type="subcellular location">
    <subcellularLocation>
        <location evidence="1">Nucleus</location>
    </subcellularLocation>
</comment>
<comment type="alternative products">
    <event type="alternative splicing"/>
    <isoform>
        <id>Q8IXZ2-1</id>
        <name>1</name>
        <sequence type="displayed"/>
    </isoform>
    <isoform>
        <id>Q8IXZ2-2</id>
        <name>2</name>
        <sequence type="described" ref="VSP_010272 VSP_010273"/>
    </isoform>
</comment>
<name>ZC3H3_HUMAN</name>
<protein>
    <recommendedName>
        <fullName>Zinc finger CCCH domain-containing protein 3</fullName>
    </recommendedName>
    <alternativeName>
        <fullName evidence="1">Smad-interacting CPSF-like factor</fullName>
    </alternativeName>
</protein>
<sequence>MEEKEILRRQIRLLQGLIDDYKTLHGNAPAPGTPAASGWQPPTYHSGRAFSARYPRPSRRGYSSHHGPSWRKKYSLVNRPPGPSDPPADHAVRPLHGARGGQPPVPQQHVLERQVQLSQGQNVVIKVKPPSKSGSASASGAQRGSLEEFEETPWSDQRPREGEGEPPRGQLQPSRPTRARGTCSVEDPLLVCQKEPGKPRMVKSVGSVGDSPREPRRTVSESVIAVKASFPSSALPPRTGVALGRKLGSHSVASCAPQLLGDRRVDAGHTDQPVPSGSVGGPARPASGPRQAREASLVVTCRTNKFRKNNYKWVAASSKSPRVARRALSPRVAAENVCKASAGMANKVEKPQLIADPEPKPRKPATSSKPGSAPSKYKWKASSPSASSSSSFRWQSEASSKDHASQLSPVLSRSPSGDRPAVGHSGLKPLSGETPLSAYKVKSRTKIIRRRSSTSLPGDKKSGTSPAATAKSHLSLRRRQALRGKSSPVLKKTPNKGLVQVTTHRLCRLPPSRAHLPTKEASSLHAVRTAPTSKVIKTRYRIVKKTPASPLSAPPFPLSLPSWRARRLSLSRSLVLNRLRPVASGGGKAQPGSPWWRSKGYRCIGGVLYKVSANKLSKTSGQPSDAGSRPLLRTGRLDPAGSCSRSLASRAVQRSLAIIRQARQRREKRKEYCMYYNRFGRCNRGERCPYIHDPEKVAVCTRFVRGTCKKTDGTCPFSHHVSKEKMPVCSYFLKGICSNSNCPYSHVYVSRKAEVCSDFLKGYCPLGAKCKKKHTLLCPDFARRGACPRGAQCQLLHRTQKRHSRRAATSPAPGPSDATARSRVSASHGPRKPSASQRPTRQTPSSAALTAAAVAAPPHCPGGSASPSSSKASSSSSSSSSPPASLDHEAPSLQEAALAAACSNRLCKLPSFISLQSSPSPGAQPRVRAPRAPLTKDSGKPLHIKPRL</sequence>
<feature type="chain" id="PRO_0000213896" description="Zinc finger CCCH domain-containing protein 3">
    <location>
        <begin position="1"/>
        <end position="948"/>
    </location>
</feature>
<feature type="zinc finger region" description="C3H1-type 1" evidence="2">
    <location>
        <begin position="667"/>
        <end position="695"/>
    </location>
</feature>
<feature type="zinc finger region" description="C3H1-type 2" evidence="2">
    <location>
        <begin position="699"/>
        <end position="722"/>
    </location>
</feature>
<feature type="zinc finger region" description="C3H1-type 3" evidence="2">
    <location>
        <begin position="723"/>
        <end position="749"/>
    </location>
</feature>
<feature type="zinc finger region" description="C3H1-type 4" evidence="2">
    <location>
        <begin position="750"/>
        <end position="777"/>
    </location>
</feature>
<feature type="zinc finger region" description="C3H1-type 5" evidence="2">
    <location>
        <begin position="778"/>
        <end position="800"/>
    </location>
</feature>
<feature type="region of interest" description="Disordered" evidence="3">
    <location>
        <begin position="25"/>
        <end position="108"/>
    </location>
</feature>
<feature type="region of interest" description="Disordered" evidence="3">
    <location>
        <begin position="121"/>
        <end position="219"/>
    </location>
</feature>
<feature type="region of interest" description="Disordered" evidence="3">
    <location>
        <begin position="265"/>
        <end position="296"/>
    </location>
</feature>
<feature type="region of interest" description="Disordered" evidence="3">
    <location>
        <begin position="336"/>
        <end position="493"/>
    </location>
</feature>
<feature type="region of interest" description="Disordered" evidence="3">
    <location>
        <begin position="798"/>
        <end position="891"/>
    </location>
</feature>
<feature type="region of interest" description="Disordered" evidence="3">
    <location>
        <begin position="913"/>
        <end position="948"/>
    </location>
</feature>
<feature type="compositionally biased region" description="Basic residues" evidence="3">
    <location>
        <begin position="56"/>
        <end position="74"/>
    </location>
</feature>
<feature type="compositionally biased region" description="Low complexity" evidence="3">
    <location>
        <begin position="128"/>
        <end position="141"/>
    </location>
</feature>
<feature type="compositionally biased region" description="Basic and acidic residues" evidence="3">
    <location>
        <begin position="157"/>
        <end position="166"/>
    </location>
</feature>
<feature type="compositionally biased region" description="Low complexity" evidence="3">
    <location>
        <begin position="372"/>
        <end position="398"/>
    </location>
</feature>
<feature type="compositionally biased region" description="Polar residues" evidence="3">
    <location>
        <begin position="405"/>
        <end position="415"/>
    </location>
</feature>
<feature type="compositionally biased region" description="Basic residues" evidence="3">
    <location>
        <begin position="441"/>
        <end position="452"/>
    </location>
</feature>
<feature type="compositionally biased region" description="Polar residues" evidence="3">
    <location>
        <begin position="834"/>
        <end position="846"/>
    </location>
</feature>
<feature type="compositionally biased region" description="Low complexity" evidence="3">
    <location>
        <begin position="847"/>
        <end position="856"/>
    </location>
</feature>
<feature type="compositionally biased region" description="Low complexity" evidence="3">
    <location>
        <begin position="864"/>
        <end position="885"/>
    </location>
</feature>
<feature type="modified residue" description="Phosphoserine" evidence="10 11">
    <location>
        <position position="408"/>
    </location>
</feature>
<feature type="modified residue" description="Phosphoserine" evidence="9">
    <location>
        <position position="918"/>
    </location>
</feature>
<feature type="modified residue" description="Phosphoserine" evidence="9">
    <location>
        <position position="920"/>
    </location>
</feature>
<feature type="splice variant" id="VSP_010272" description="In isoform 2." evidence="7">
    <location>
        <begin position="1"/>
        <end position="613"/>
    </location>
</feature>
<feature type="splice variant" id="VSP_010273" description="In isoform 2." evidence="7">
    <original>NKLSKTSGQPSDAGSRPLLRT</original>
    <variation>MEPGGEPTGAKESSTLMESLA</variation>
    <location>
        <begin position="614"/>
        <end position="634"/>
    </location>
</feature>
<feature type="sequence variant" id="VAR_018457" description="In dbSNP:rs2242093." evidence="4">
    <original>I</original>
    <variation>M</variation>
    <location>
        <position position="6"/>
    </location>
</feature>
<feature type="sequence variant" id="VAR_060402" description="In dbSNP:rs17857167." evidence="4">
    <original>Q</original>
    <variation>R</variation>
    <location>
        <position position="102"/>
    </location>
</feature>
<feature type="sequence variant" id="VAR_018458" description="In dbSNP:rs3750206.">
    <original>F</original>
    <variation>Y</variation>
    <location>
        <position position="149"/>
    </location>
</feature>
<feature type="sequence variant" id="VAR_018459" description="In dbSNP:rs3750207." evidence="6">
    <original>E</original>
    <variation>D</variation>
    <location>
        <position position="151"/>
    </location>
</feature>
<feature type="sequence variant" id="VAR_060403" description="In dbSNP:rs17853852." evidence="4">
    <original>E</original>
    <variation>K</variation>
    <location>
        <position position="165"/>
    </location>
</feature>
<feature type="sequence variant" id="VAR_057484" description="In dbSNP:rs3750208.">
    <original>R</original>
    <variation>W</variation>
    <location>
        <position position="168"/>
    </location>
</feature>
<feature type="sequence variant" id="VAR_057485" description="In dbSNP:rs4873802.">
    <original>A</original>
    <variation>S</variation>
    <location>
        <position position="228"/>
    </location>
</feature>
<feature type="sequence variant" id="VAR_060404" description="In dbSNP:rs17853853." evidence="4">
    <original>P</original>
    <variation>A</variation>
    <location>
        <position position="231"/>
    </location>
</feature>
<feature type="sequence variant" id="VAR_057486" description="In dbSNP:rs34674128.">
    <original>P</original>
    <variation>L</variation>
    <location>
        <position position="351"/>
    </location>
</feature>
<feature type="sequence variant" id="VAR_018460" description="In dbSNP:rs1318196." evidence="6">
    <original>S</original>
    <variation>G</variation>
    <location>
        <position position="399"/>
    </location>
</feature>
<feature type="sequence variant" id="VAR_057487" description="In dbSNP:rs36008851.">
    <original>P</original>
    <variation>L</variation>
    <location>
        <position position="415"/>
    </location>
</feature>
<feature type="sequence variant" id="VAR_018461" description="In dbSNP:rs4874147." evidence="4 6">
    <original>S</original>
    <variation>G</variation>
    <location>
        <position position="452"/>
    </location>
</feature>
<feature type="sequence variant" id="VAR_057488" description="In dbSNP:rs11548254.">
    <original>T</original>
    <variation>K</variation>
    <location>
        <position position="503"/>
    </location>
</feature>
<feature type="sequence variant" id="VAR_060405" description="In dbSNP:rs17855618." evidence="4">
    <original>R</original>
    <variation>H</variation>
    <location>
        <position position="578"/>
    </location>
</feature>
<feature type="sequence variant" id="VAR_060406" description="In dbSNP:rs17857164." evidence="4">
    <original>R</original>
    <variation>W</variation>
    <location>
        <position position="636"/>
    </location>
</feature>
<feature type="sequence variant" id="VAR_060407" description="In dbSNP:rs17857168." evidence="4">
    <original>P</original>
    <variation>R</variation>
    <location>
        <position position="727"/>
    </location>
</feature>
<feature type="sequence conflict" description="In Ref. 2; AAH38670." evidence="8" ref="2">
    <original>R</original>
    <variation>G</variation>
    <location>
        <position position="572"/>
    </location>
</feature>
<gene>
    <name type="primary">ZC3H3</name>
    <name type="synonym">KIAA0150</name>
    <name evidence="1" type="synonym">SMICL</name>
    <name type="synonym">ZC3HDC3</name>
</gene>
<accession>Q8IXZ2</accession>
<accession>Q14163</accession>
<accession>Q8N4E2</accession>
<accession>Q9BUS4</accession>
<evidence type="ECO:0000250" key="1">
    <source>
        <dbReference type="UniProtKB" id="Q8CHP0"/>
    </source>
</evidence>
<evidence type="ECO:0000255" key="2">
    <source>
        <dbReference type="PROSITE-ProRule" id="PRU00723"/>
    </source>
</evidence>
<evidence type="ECO:0000256" key="3">
    <source>
        <dbReference type="SAM" id="MobiDB-lite"/>
    </source>
</evidence>
<evidence type="ECO:0000269" key="4">
    <source>
    </source>
</evidence>
<evidence type="ECO:0000269" key="5">
    <source>
    </source>
</evidence>
<evidence type="ECO:0000269" key="6">
    <source>
    </source>
</evidence>
<evidence type="ECO:0000303" key="7">
    <source>
    </source>
</evidence>
<evidence type="ECO:0000305" key="8"/>
<evidence type="ECO:0007744" key="9">
    <source>
    </source>
</evidence>
<evidence type="ECO:0007744" key="10">
    <source>
    </source>
</evidence>
<evidence type="ECO:0007744" key="11">
    <source>
    </source>
</evidence>